<organism>
    <name type="scientific">Lachnoclostridium phytofermentans (strain ATCC 700394 / DSM 18823 / ISDg)</name>
    <name type="common">Clostridium phytofermentans</name>
    <dbReference type="NCBI Taxonomy" id="357809"/>
    <lineage>
        <taxon>Bacteria</taxon>
        <taxon>Bacillati</taxon>
        <taxon>Bacillota</taxon>
        <taxon>Clostridia</taxon>
        <taxon>Lachnospirales</taxon>
        <taxon>Lachnospiraceae</taxon>
    </lineage>
</organism>
<name>SELO_LACP7</name>
<dbReference type="EC" id="2.7.7.-" evidence="1"/>
<dbReference type="EC" id="2.7.7.108" evidence="1"/>
<dbReference type="EMBL" id="CP000885">
    <property type="protein sequence ID" value="ABX41377.1"/>
    <property type="molecule type" value="Genomic_DNA"/>
</dbReference>
<dbReference type="RefSeq" id="WP_012199023.1">
    <property type="nucleotide sequence ID" value="NC_010001.1"/>
</dbReference>
<dbReference type="SMR" id="A9KM34"/>
<dbReference type="KEGG" id="cpy:Cphy_0997"/>
<dbReference type="eggNOG" id="COG0397">
    <property type="taxonomic scope" value="Bacteria"/>
</dbReference>
<dbReference type="HOGENOM" id="CLU_010245_4_1_9"/>
<dbReference type="OrthoDB" id="9773505at2"/>
<dbReference type="Proteomes" id="UP000000370">
    <property type="component" value="Chromosome"/>
</dbReference>
<dbReference type="GO" id="GO:0070733">
    <property type="term" value="F:AMPylase activity"/>
    <property type="evidence" value="ECO:0007669"/>
    <property type="project" value="RHEA"/>
</dbReference>
<dbReference type="GO" id="GO:0005524">
    <property type="term" value="F:ATP binding"/>
    <property type="evidence" value="ECO:0007669"/>
    <property type="project" value="UniProtKB-UniRule"/>
</dbReference>
<dbReference type="GO" id="GO:0000287">
    <property type="term" value="F:magnesium ion binding"/>
    <property type="evidence" value="ECO:0007669"/>
    <property type="project" value="UniProtKB-UniRule"/>
</dbReference>
<dbReference type="HAMAP" id="MF_00692">
    <property type="entry name" value="YdiU_SelO"/>
    <property type="match status" value="1"/>
</dbReference>
<dbReference type="InterPro" id="IPR003846">
    <property type="entry name" value="SelO"/>
</dbReference>
<dbReference type="NCBIfam" id="NF000658">
    <property type="entry name" value="PRK00029.1"/>
    <property type="match status" value="1"/>
</dbReference>
<dbReference type="PANTHER" id="PTHR32057">
    <property type="entry name" value="PROTEIN ADENYLYLTRANSFERASE SELO, MITOCHONDRIAL"/>
    <property type="match status" value="1"/>
</dbReference>
<dbReference type="PANTHER" id="PTHR32057:SF14">
    <property type="entry name" value="PROTEIN ADENYLYLTRANSFERASE SELO, MITOCHONDRIAL"/>
    <property type="match status" value="1"/>
</dbReference>
<dbReference type="Pfam" id="PF02696">
    <property type="entry name" value="SelO"/>
    <property type="match status" value="1"/>
</dbReference>
<feature type="chain" id="PRO_1000083128" description="Protein nucleotidyltransferase YdiU">
    <location>
        <begin position="1"/>
        <end position="484"/>
    </location>
</feature>
<feature type="active site" description="Proton acceptor" evidence="1">
    <location>
        <position position="249"/>
    </location>
</feature>
<feature type="binding site" evidence="1">
    <location>
        <position position="87"/>
    </location>
    <ligand>
        <name>ATP</name>
        <dbReference type="ChEBI" id="CHEBI:30616"/>
    </ligand>
</feature>
<feature type="binding site" evidence="1">
    <location>
        <position position="89"/>
    </location>
    <ligand>
        <name>ATP</name>
        <dbReference type="ChEBI" id="CHEBI:30616"/>
    </ligand>
</feature>
<feature type="binding site" evidence="1">
    <location>
        <position position="90"/>
    </location>
    <ligand>
        <name>ATP</name>
        <dbReference type="ChEBI" id="CHEBI:30616"/>
    </ligand>
</feature>
<feature type="binding site" evidence="1">
    <location>
        <position position="110"/>
    </location>
    <ligand>
        <name>ATP</name>
        <dbReference type="ChEBI" id="CHEBI:30616"/>
    </ligand>
</feature>
<feature type="binding site" evidence="1">
    <location>
        <position position="122"/>
    </location>
    <ligand>
        <name>ATP</name>
        <dbReference type="ChEBI" id="CHEBI:30616"/>
    </ligand>
</feature>
<feature type="binding site" evidence="1">
    <location>
        <position position="123"/>
    </location>
    <ligand>
        <name>ATP</name>
        <dbReference type="ChEBI" id="CHEBI:30616"/>
    </ligand>
</feature>
<feature type="binding site" evidence="1">
    <location>
        <position position="173"/>
    </location>
    <ligand>
        <name>ATP</name>
        <dbReference type="ChEBI" id="CHEBI:30616"/>
    </ligand>
</feature>
<feature type="binding site" evidence="1">
    <location>
        <position position="180"/>
    </location>
    <ligand>
        <name>ATP</name>
        <dbReference type="ChEBI" id="CHEBI:30616"/>
    </ligand>
</feature>
<feature type="binding site" evidence="1">
    <location>
        <position position="250"/>
    </location>
    <ligand>
        <name>Mg(2+)</name>
        <dbReference type="ChEBI" id="CHEBI:18420"/>
    </ligand>
</feature>
<feature type="binding site" evidence="1">
    <location>
        <position position="259"/>
    </location>
    <ligand>
        <name>ATP</name>
        <dbReference type="ChEBI" id="CHEBI:30616"/>
    </ligand>
</feature>
<feature type="binding site" evidence="1">
    <location>
        <position position="259"/>
    </location>
    <ligand>
        <name>Mg(2+)</name>
        <dbReference type="ChEBI" id="CHEBI:18420"/>
    </ligand>
</feature>
<comment type="function">
    <text evidence="1">Nucleotidyltransferase involved in the post-translational modification of proteins. It can catalyze the addition of adenosine monophosphate (AMP) or uridine monophosphate (UMP) to a protein, resulting in modifications known as AMPylation and UMPylation.</text>
</comment>
<comment type="catalytic activity">
    <reaction evidence="1">
        <text>L-seryl-[protein] + ATP = 3-O-(5'-adenylyl)-L-seryl-[protein] + diphosphate</text>
        <dbReference type="Rhea" id="RHEA:58120"/>
        <dbReference type="Rhea" id="RHEA-COMP:9863"/>
        <dbReference type="Rhea" id="RHEA-COMP:15073"/>
        <dbReference type="ChEBI" id="CHEBI:29999"/>
        <dbReference type="ChEBI" id="CHEBI:30616"/>
        <dbReference type="ChEBI" id="CHEBI:33019"/>
        <dbReference type="ChEBI" id="CHEBI:142516"/>
        <dbReference type="EC" id="2.7.7.108"/>
    </reaction>
</comment>
<comment type="catalytic activity">
    <reaction evidence="1">
        <text>L-threonyl-[protein] + ATP = 3-O-(5'-adenylyl)-L-threonyl-[protein] + diphosphate</text>
        <dbReference type="Rhea" id="RHEA:54292"/>
        <dbReference type="Rhea" id="RHEA-COMP:11060"/>
        <dbReference type="Rhea" id="RHEA-COMP:13847"/>
        <dbReference type="ChEBI" id="CHEBI:30013"/>
        <dbReference type="ChEBI" id="CHEBI:30616"/>
        <dbReference type="ChEBI" id="CHEBI:33019"/>
        <dbReference type="ChEBI" id="CHEBI:138113"/>
        <dbReference type="EC" id="2.7.7.108"/>
    </reaction>
</comment>
<comment type="catalytic activity">
    <reaction evidence="1">
        <text>L-tyrosyl-[protein] + ATP = O-(5'-adenylyl)-L-tyrosyl-[protein] + diphosphate</text>
        <dbReference type="Rhea" id="RHEA:54288"/>
        <dbReference type="Rhea" id="RHEA-COMP:10136"/>
        <dbReference type="Rhea" id="RHEA-COMP:13846"/>
        <dbReference type="ChEBI" id="CHEBI:30616"/>
        <dbReference type="ChEBI" id="CHEBI:33019"/>
        <dbReference type="ChEBI" id="CHEBI:46858"/>
        <dbReference type="ChEBI" id="CHEBI:83624"/>
        <dbReference type="EC" id="2.7.7.108"/>
    </reaction>
</comment>
<comment type="catalytic activity">
    <reaction evidence="1">
        <text>L-histidyl-[protein] + UTP = N(tele)-(5'-uridylyl)-L-histidyl-[protein] + diphosphate</text>
        <dbReference type="Rhea" id="RHEA:83891"/>
        <dbReference type="Rhea" id="RHEA-COMP:9745"/>
        <dbReference type="Rhea" id="RHEA-COMP:20239"/>
        <dbReference type="ChEBI" id="CHEBI:29979"/>
        <dbReference type="ChEBI" id="CHEBI:33019"/>
        <dbReference type="ChEBI" id="CHEBI:46398"/>
        <dbReference type="ChEBI" id="CHEBI:233474"/>
    </reaction>
</comment>
<comment type="catalytic activity">
    <reaction evidence="1">
        <text>L-seryl-[protein] + UTP = O-(5'-uridylyl)-L-seryl-[protein] + diphosphate</text>
        <dbReference type="Rhea" id="RHEA:64604"/>
        <dbReference type="Rhea" id="RHEA-COMP:9863"/>
        <dbReference type="Rhea" id="RHEA-COMP:16635"/>
        <dbReference type="ChEBI" id="CHEBI:29999"/>
        <dbReference type="ChEBI" id="CHEBI:33019"/>
        <dbReference type="ChEBI" id="CHEBI:46398"/>
        <dbReference type="ChEBI" id="CHEBI:156051"/>
    </reaction>
</comment>
<comment type="catalytic activity">
    <reaction evidence="1">
        <text>L-tyrosyl-[protein] + UTP = O-(5'-uridylyl)-L-tyrosyl-[protein] + diphosphate</text>
        <dbReference type="Rhea" id="RHEA:83887"/>
        <dbReference type="Rhea" id="RHEA-COMP:10136"/>
        <dbReference type="Rhea" id="RHEA-COMP:20238"/>
        <dbReference type="ChEBI" id="CHEBI:33019"/>
        <dbReference type="ChEBI" id="CHEBI:46398"/>
        <dbReference type="ChEBI" id="CHEBI:46858"/>
        <dbReference type="ChEBI" id="CHEBI:90602"/>
    </reaction>
</comment>
<comment type="cofactor">
    <cofactor evidence="1">
        <name>Mg(2+)</name>
        <dbReference type="ChEBI" id="CHEBI:18420"/>
    </cofactor>
    <cofactor evidence="1">
        <name>Mn(2+)</name>
        <dbReference type="ChEBI" id="CHEBI:29035"/>
    </cofactor>
</comment>
<comment type="similarity">
    <text evidence="1">Belongs to the SELO family.</text>
</comment>
<sequence>MSPNISLDNTYITLPEEFYTEQLPSKVPSPKLVKWNSTLAKELGLDSDFFQSEEGALVLSGNQILEDTTPIAEAYAGHQFGYFTMLGDGRAVLLGEIVTNDEERYDIQLKGSGRTPYSRGGDGKATLGPMLREYIISEGMKGLGIPSTRSLAVLTTGETILRETALPGAILVRVAKSHIRVGTFQFANQFLDTKELKALADYTIKRHYKEIFTKEDRYRHFLHEVVKNQARLIAQWQLVGFIHGVMNTDNMVISGETIDYGPCAFMDTYHPETVFSSIDTEGRYAYQNQPKMASWDLARLAEALVPLLNDNTEKAIEIAQEEINQFSKLYLTFWYEGMRKKLGLFHENDMDEDLIEALLGLMVKYEADYTNTFRDLTLNQTTQPNLKGSAEYQQWLDLWQDRRKKQEESLEDSIKLMESVNPTVIPRNHRVEEALERAVNYHDYNAMDSLVSVLQHPYDYKNQNDYYATPPGKTACGYRTFCGT</sequence>
<protein>
    <recommendedName>
        <fullName evidence="1">Protein nucleotidyltransferase YdiU</fullName>
        <ecNumber evidence="1">2.7.7.-</ecNumber>
    </recommendedName>
    <alternativeName>
        <fullName evidence="1">Protein adenylyltransferase YdiU</fullName>
        <ecNumber evidence="1">2.7.7.108</ecNumber>
    </alternativeName>
    <alternativeName>
        <fullName evidence="1">Protein uridylyltransferase YdiU</fullName>
        <ecNumber evidence="1">2.7.7.-</ecNumber>
    </alternativeName>
</protein>
<evidence type="ECO:0000255" key="1">
    <source>
        <dbReference type="HAMAP-Rule" id="MF_00692"/>
    </source>
</evidence>
<keyword id="KW-0067">ATP-binding</keyword>
<keyword id="KW-0460">Magnesium</keyword>
<keyword id="KW-0464">Manganese</keyword>
<keyword id="KW-0479">Metal-binding</keyword>
<keyword id="KW-0547">Nucleotide-binding</keyword>
<keyword id="KW-0548">Nucleotidyltransferase</keyword>
<keyword id="KW-1185">Reference proteome</keyword>
<keyword id="KW-0808">Transferase</keyword>
<reference key="1">
    <citation type="submission" date="2007-11" db="EMBL/GenBank/DDBJ databases">
        <title>Complete genome sequence of Clostridium phytofermentans ISDg.</title>
        <authorList>
            <person name="Leschine S.B."/>
            <person name="Warnick T.A."/>
            <person name="Blanchard J.L."/>
            <person name="Schnell D.J."/>
            <person name="Petit E.L."/>
            <person name="LaTouf W.G."/>
            <person name="Copeland A."/>
            <person name="Lucas S."/>
            <person name="Lapidus A."/>
            <person name="Barry K."/>
            <person name="Glavina del Rio T."/>
            <person name="Dalin E."/>
            <person name="Tice H."/>
            <person name="Pitluck S."/>
            <person name="Kiss H."/>
            <person name="Brettin T."/>
            <person name="Bruce D."/>
            <person name="Detter J.C."/>
            <person name="Han C."/>
            <person name="Kuske C."/>
            <person name="Schmutz J."/>
            <person name="Larimer F."/>
            <person name="Land M."/>
            <person name="Hauser L."/>
            <person name="Kyrpides N."/>
            <person name="Kim E.A."/>
            <person name="Richardson P."/>
        </authorList>
    </citation>
    <scope>NUCLEOTIDE SEQUENCE [LARGE SCALE GENOMIC DNA]</scope>
    <source>
        <strain>ATCC 700394 / DSM 18823 / ISDg</strain>
    </source>
</reference>
<gene>
    <name evidence="1" type="primary">ydiU</name>
    <name evidence="1" type="synonym">selO</name>
    <name type="ordered locus">Cphy_0997</name>
</gene>
<accession>A9KM34</accession>
<proteinExistence type="inferred from homology"/>